<name>YCF60_PORPU</name>
<protein>
    <recommendedName>
        <fullName>Tic20 family protein Ycf60</fullName>
    </recommendedName>
</protein>
<sequence length="203" mass="23304">MIRLFTFGIITMLVLVIARLAIQRAYKYITLNTNINTTESKTRLSIRLVSIIPYYLPLFEGLQNFGQYVLPDYPVGAIPLYKKILLPMLIFYMNHAILGLVTFFALYYVLVRNKSPITVHQLVRFNSMQSILLFLVGSLFGAIFRAFPIEFRISFIGLTVCNMMFWFILSTITYSIVKAIQGKYSNIPVISEAVRIQISGYNT</sequence>
<gene>
    <name type="primary">ycf60</name>
</gene>
<keyword id="KW-0150">Chloroplast</keyword>
<keyword id="KW-0472">Membrane</keyword>
<keyword id="KW-0934">Plastid</keyword>
<keyword id="KW-0812">Transmembrane</keyword>
<keyword id="KW-1133">Transmembrane helix</keyword>
<proteinExistence type="inferred from homology"/>
<reference key="1">
    <citation type="journal article" date="1995" name="Plant Mol. Biol. Rep.">
        <title>Complete nucleotide sequence of the Porphyra purpurea chloroplast genome.</title>
        <authorList>
            <person name="Reith M.E."/>
            <person name="Munholland J."/>
        </authorList>
    </citation>
    <scope>NUCLEOTIDE SEQUENCE [LARGE SCALE GENOMIC DNA]</scope>
    <source>
        <strain>Avonport</strain>
    </source>
</reference>
<accession>P51360</accession>
<evidence type="ECO:0000255" key="1"/>
<evidence type="ECO:0000305" key="2"/>
<geneLocation type="chloroplast"/>
<comment type="subcellular location">
    <subcellularLocation>
        <location evidence="2">Plastid</location>
        <location evidence="2">Chloroplast membrane</location>
        <topology evidence="2">Multi-pass membrane protein</topology>
    </subcellularLocation>
</comment>
<comment type="similarity">
    <text evidence="2">Belongs to the Tic20 family.</text>
</comment>
<organism>
    <name type="scientific">Porphyra purpurea</name>
    <name type="common">Red seaweed</name>
    <name type="synonym">Ulva purpurea</name>
    <dbReference type="NCBI Taxonomy" id="2787"/>
    <lineage>
        <taxon>Eukaryota</taxon>
        <taxon>Rhodophyta</taxon>
        <taxon>Bangiophyceae</taxon>
        <taxon>Bangiales</taxon>
        <taxon>Bangiaceae</taxon>
        <taxon>Porphyra</taxon>
    </lineage>
</organism>
<dbReference type="EMBL" id="U38804">
    <property type="protein sequence ID" value="AAC08246.1"/>
    <property type="molecule type" value="Genomic_DNA"/>
</dbReference>
<dbReference type="PIR" id="S73281">
    <property type="entry name" value="S73281"/>
</dbReference>
<dbReference type="SMR" id="P51360"/>
<dbReference type="GO" id="GO:0031969">
    <property type="term" value="C:chloroplast membrane"/>
    <property type="evidence" value="ECO:0007669"/>
    <property type="project" value="UniProtKB-SubCell"/>
</dbReference>
<dbReference type="InterPro" id="IPR005691">
    <property type="entry name" value="Tic20"/>
</dbReference>
<dbReference type="PANTHER" id="PTHR33510">
    <property type="entry name" value="PROTEIN TIC 20-II, CHLOROPLASTIC"/>
    <property type="match status" value="1"/>
</dbReference>
<dbReference type="PANTHER" id="PTHR33510:SF5">
    <property type="entry name" value="PROTEIN TIC 20-II, CHLOROPLASTIC"/>
    <property type="match status" value="1"/>
</dbReference>
<dbReference type="Pfam" id="PF16166">
    <property type="entry name" value="TIC20"/>
    <property type="match status" value="1"/>
</dbReference>
<feature type="chain" id="PRO_0000217483" description="Tic20 family protein Ycf60">
    <location>
        <begin position="1"/>
        <end position="203"/>
    </location>
</feature>
<feature type="transmembrane region" description="Helical" evidence="1">
    <location>
        <begin position="2"/>
        <end position="22"/>
    </location>
</feature>
<feature type="transmembrane region" description="Helical" evidence="1">
    <location>
        <begin position="51"/>
        <end position="71"/>
    </location>
</feature>
<feature type="transmembrane region" description="Helical" evidence="1">
    <location>
        <begin position="84"/>
        <end position="104"/>
    </location>
</feature>
<feature type="transmembrane region" description="Helical" evidence="1">
    <location>
        <begin position="131"/>
        <end position="151"/>
    </location>
</feature>
<feature type="transmembrane region" description="Helical" evidence="1">
    <location>
        <begin position="153"/>
        <end position="173"/>
    </location>
</feature>